<reference key="1">
    <citation type="journal article" date="2002" name="Connect. Tissue Res.">
        <title>Porcine N-acetylgalactosamine 6-sulfatase (GALNS) cDNA sequence and expression in developing teeth.</title>
        <authorList>
            <person name="Yamakoshi Y."/>
            <person name="Hu J.C."/>
            <person name="Liu S."/>
            <person name="Sun X."/>
            <person name="Zhang C."/>
            <person name="Oida S."/>
            <person name="Fukae M."/>
            <person name="Simmer J.P."/>
        </authorList>
    </citation>
    <scope>NUCLEOTIDE SEQUENCE [MRNA]</scope>
</reference>
<proteinExistence type="evidence at transcript level"/>
<comment type="catalytic activity">
    <reaction>
        <text>Hydrolysis of the 6-sulfate groups of the N-acetyl-D-galactosamine 6-sulfate units of chondroitin sulfate and of the D-galactose 6-sulfate units of keratan sulfate.</text>
        <dbReference type="EC" id="3.1.6.4"/>
    </reaction>
</comment>
<comment type="cofactor">
    <cofactor evidence="1">
        <name>Ca(2+)</name>
        <dbReference type="ChEBI" id="CHEBI:29108"/>
    </cofactor>
    <text evidence="1">Binds 1 Ca(2+) ion per subunit.</text>
</comment>
<comment type="subunit">
    <text evidence="1">Homodimer.</text>
</comment>
<comment type="subcellular location">
    <subcellularLocation>
        <location evidence="1">Lysosome</location>
    </subcellularLocation>
</comment>
<comment type="PTM">
    <text evidence="1">The conversion to 3-oxoalanine (also known as C-formylglycine, FGly), of a serine or cysteine residue in prokaryotes and of a cysteine residue in eukaryotes, is critical for catalytic activity.</text>
</comment>
<comment type="similarity">
    <text evidence="4">Belongs to the sulfatase family.</text>
</comment>
<gene>
    <name type="primary">GALNS</name>
</gene>
<protein>
    <recommendedName>
        <fullName>N-acetylgalactosamine-6-sulfatase</fullName>
        <ecNumber>3.1.6.4</ecNumber>
    </recommendedName>
    <alternativeName>
        <fullName>Chondroitinsulfatase</fullName>
        <shortName>Chondroitinase</shortName>
    </alternativeName>
    <alternativeName>
        <fullName>Galactose-6-sulfate sulfatase</fullName>
    </alternativeName>
    <alternativeName>
        <fullName>N-acetylgalactosamine-6-sulfate sulfatase</fullName>
        <shortName>GalNAc6S sulfatase</shortName>
    </alternativeName>
</protein>
<feature type="signal peptide" evidence="1">
    <location>
        <begin position="1"/>
        <end position="25"/>
    </location>
</feature>
<feature type="chain" id="PRO_0000273149" description="N-acetylgalactosamine-6-sulfatase">
    <location>
        <begin position="26"/>
        <end position="522"/>
    </location>
</feature>
<feature type="region of interest" description="Catalytic domain" evidence="1">
    <location>
        <begin position="27"/>
        <end position="379"/>
    </location>
</feature>
<feature type="active site" description="Nucleophile" evidence="2">
    <location>
        <position position="78"/>
    </location>
</feature>
<feature type="active site" evidence="2">
    <location>
        <position position="141"/>
    </location>
</feature>
<feature type="binding site" evidence="1">
    <location>
        <position position="38"/>
    </location>
    <ligand>
        <name>Ca(2+)</name>
        <dbReference type="ChEBI" id="CHEBI:29108"/>
    </ligand>
</feature>
<feature type="binding site" evidence="1">
    <location>
        <position position="39"/>
    </location>
    <ligand>
        <name>Ca(2+)</name>
        <dbReference type="ChEBI" id="CHEBI:29108"/>
    </ligand>
</feature>
<feature type="binding site" description="via 3-oxoalanine" evidence="1">
    <location>
        <position position="78"/>
    </location>
    <ligand>
        <name>Ca(2+)</name>
        <dbReference type="ChEBI" id="CHEBI:29108"/>
    </ligand>
</feature>
<feature type="binding site" evidence="1">
    <location>
        <position position="288"/>
    </location>
    <ligand>
        <name>Ca(2+)</name>
        <dbReference type="ChEBI" id="CHEBI:29108"/>
    </ligand>
</feature>
<feature type="binding site" evidence="1">
    <location>
        <position position="289"/>
    </location>
    <ligand>
        <name>Ca(2+)</name>
        <dbReference type="ChEBI" id="CHEBI:29108"/>
    </ligand>
</feature>
<feature type="modified residue" description="3-oxoalanine (Cys)" evidence="2">
    <location>
        <position position="78"/>
    </location>
</feature>
<feature type="glycosylation site" description="N-linked (GlcNAc...) asparagine" evidence="3">
    <location>
        <position position="203"/>
    </location>
</feature>
<feature type="glycosylation site" description="N-linked (GlcNAc...) asparagine" evidence="3">
    <location>
        <position position="423"/>
    </location>
</feature>
<feature type="disulfide bond" evidence="1">
    <location>
        <begin position="308"/>
        <end position="419"/>
    </location>
</feature>
<feature type="disulfide bond" evidence="1">
    <location>
        <begin position="489"/>
        <end position="518"/>
    </location>
</feature>
<feature type="disulfide bond" evidence="1">
    <location>
        <begin position="501"/>
        <end position="507"/>
    </location>
</feature>
<organism>
    <name type="scientific">Sus scrofa</name>
    <name type="common">Pig</name>
    <dbReference type="NCBI Taxonomy" id="9823"/>
    <lineage>
        <taxon>Eukaryota</taxon>
        <taxon>Metazoa</taxon>
        <taxon>Chordata</taxon>
        <taxon>Craniata</taxon>
        <taxon>Vertebrata</taxon>
        <taxon>Euteleostomi</taxon>
        <taxon>Mammalia</taxon>
        <taxon>Eutheria</taxon>
        <taxon>Laurasiatheria</taxon>
        <taxon>Artiodactyla</taxon>
        <taxon>Suina</taxon>
        <taxon>Suidae</taxon>
        <taxon>Sus</taxon>
    </lineage>
</organism>
<dbReference type="EC" id="3.1.6.4"/>
<dbReference type="EMBL" id="AF322917">
    <property type="protein sequence ID" value="AAL55968.1"/>
    <property type="molecule type" value="mRNA"/>
</dbReference>
<dbReference type="RefSeq" id="NP_999120.1">
    <property type="nucleotide sequence ID" value="NM_213955.1"/>
</dbReference>
<dbReference type="RefSeq" id="XP_005653291.2">
    <property type="nucleotide sequence ID" value="XM_005653234.2"/>
</dbReference>
<dbReference type="SMR" id="Q8WNQ7"/>
<dbReference type="FunCoup" id="Q8WNQ7">
    <property type="interactions" value="714"/>
</dbReference>
<dbReference type="STRING" id="9823.ENSSSCP00000052154"/>
<dbReference type="GlyCosmos" id="Q8WNQ7">
    <property type="glycosylation" value="2 sites, No reported glycans"/>
</dbReference>
<dbReference type="GlyGen" id="Q8WNQ7">
    <property type="glycosylation" value="2 sites"/>
</dbReference>
<dbReference type="PaxDb" id="9823-ENSSSCP00000002856"/>
<dbReference type="PeptideAtlas" id="Q8WNQ7"/>
<dbReference type="Ensembl" id="ENSSSCT00105046785">
    <property type="protein sequence ID" value="ENSSSCP00105032604"/>
    <property type="gene ID" value="ENSSSCG00105024715"/>
</dbReference>
<dbReference type="Ensembl" id="ENSSSCT00115030538">
    <property type="protein sequence ID" value="ENSSSCP00115029033"/>
    <property type="gene ID" value="ENSSSCG00115017296"/>
</dbReference>
<dbReference type="GeneID" id="397000"/>
<dbReference type="KEGG" id="ssc:397000"/>
<dbReference type="CTD" id="2588"/>
<dbReference type="eggNOG" id="KOG3867">
    <property type="taxonomic scope" value="Eukaryota"/>
</dbReference>
<dbReference type="InParanoid" id="Q8WNQ7"/>
<dbReference type="OrthoDB" id="103349at2759"/>
<dbReference type="Proteomes" id="UP000008227">
    <property type="component" value="Unplaced"/>
</dbReference>
<dbReference type="Proteomes" id="UP000314985">
    <property type="component" value="Unplaced"/>
</dbReference>
<dbReference type="Proteomes" id="UP000694570">
    <property type="component" value="Unplaced"/>
</dbReference>
<dbReference type="Proteomes" id="UP000694571">
    <property type="component" value="Unplaced"/>
</dbReference>
<dbReference type="Proteomes" id="UP000694720">
    <property type="component" value="Unplaced"/>
</dbReference>
<dbReference type="Proteomes" id="UP000694722">
    <property type="component" value="Unplaced"/>
</dbReference>
<dbReference type="Proteomes" id="UP000694723">
    <property type="component" value="Unplaced"/>
</dbReference>
<dbReference type="Proteomes" id="UP000694724">
    <property type="component" value="Unplaced"/>
</dbReference>
<dbReference type="Proteomes" id="UP000694725">
    <property type="component" value="Unplaced"/>
</dbReference>
<dbReference type="Proteomes" id="UP000694726">
    <property type="component" value="Unplaced"/>
</dbReference>
<dbReference type="Proteomes" id="UP000694727">
    <property type="component" value="Unplaced"/>
</dbReference>
<dbReference type="Proteomes" id="UP000694728">
    <property type="component" value="Unplaced"/>
</dbReference>
<dbReference type="GO" id="GO:0005764">
    <property type="term" value="C:lysosome"/>
    <property type="evidence" value="ECO:0007669"/>
    <property type="project" value="UniProtKB-SubCell"/>
</dbReference>
<dbReference type="GO" id="GO:0004065">
    <property type="term" value="F:arylsulfatase activity"/>
    <property type="evidence" value="ECO:0000318"/>
    <property type="project" value="GO_Central"/>
</dbReference>
<dbReference type="GO" id="GO:0046872">
    <property type="term" value="F:metal ion binding"/>
    <property type="evidence" value="ECO:0007669"/>
    <property type="project" value="UniProtKB-KW"/>
</dbReference>
<dbReference type="GO" id="GO:0043890">
    <property type="term" value="F:N-acetylgalactosamine-6-sulfatase activity"/>
    <property type="evidence" value="ECO:0007669"/>
    <property type="project" value="UniProtKB-EC"/>
</dbReference>
<dbReference type="CDD" id="cd16157">
    <property type="entry name" value="GALNS"/>
    <property type="match status" value="1"/>
</dbReference>
<dbReference type="FunFam" id="3.30.1120.10:FF:000004">
    <property type="entry name" value="Galactosamine (N-acetyl)-6-sulfatase"/>
    <property type="match status" value="1"/>
</dbReference>
<dbReference type="FunFam" id="3.40.720.10:FF:000021">
    <property type="entry name" value="Galactosamine (N-acetyl)-6-sulfatase"/>
    <property type="match status" value="1"/>
</dbReference>
<dbReference type="Gene3D" id="3.30.1120.10">
    <property type="match status" value="1"/>
</dbReference>
<dbReference type="Gene3D" id="3.40.720.10">
    <property type="entry name" value="Alkaline Phosphatase, subunit A"/>
    <property type="match status" value="1"/>
</dbReference>
<dbReference type="InterPro" id="IPR017850">
    <property type="entry name" value="Alkaline_phosphatase_core_sf"/>
</dbReference>
<dbReference type="InterPro" id="IPR035626">
    <property type="entry name" value="GALNS"/>
</dbReference>
<dbReference type="InterPro" id="IPR050738">
    <property type="entry name" value="Sulfatase"/>
</dbReference>
<dbReference type="InterPro" id="IPR024607">
    <property type="entry name" value="Sulfatase_CS"/>
</dbReference>
<dbReference type="InterPro" id="IPR000917">
    <property type="entry name" value="Sulfatase_N"/>
</dbReference>
<dbReference type="PANTHER" id="PTHR42693">
    <property type="entry name" value="ARYLSULFATASE FAMILY MEMBER"/>
    <property type="match status" value="1"/>
</dbReference>
<dbReference type="PANTHER" id="PTHR42693:SF47">
    <property type="entry name" value="N-ACETYLGALACTOSAMINE-6-SULFATASE"/>
    <property type="match status" value="1"/>
</dbReference>
<dbReference type="Pfam" id="PF00884">
    <property type="entry name" value="Sulfatase"/>
    <property type="match status" value="1"/>
</dbReference>
<dbReference type="Pfam" id="PF14707">
    <property type="entry name" value="Sulfatase_C"/>
    <property type="match status" value="1"/>
</dbReference>
<dbReference type="SUPFAM" id="SSF53649">
    <property type="entry name" value="Alkaline phosphatase-like"/>
    <property type="match status" value="1"/>
</dbReference>
<dbReference type="PROSITE" id="PS00523">
    <property type="entry name" value="SULFATASE_1"/>
    <property type="match status" value="1"/>
</dbReference>
<dbReference type="PROSITE" id="PS00149">
    <property type="entry name" value="SULFATASE_2"/>
    <property type="match status" value="1"/>
</dbReference>
<evidence type="ECO:0000250" key="1"/>
<evidence type="ECO:0000250" key="2">
    <source>
        <dbReference type="UniProtKB" id="P15289"/>
    </source>
</evidence>
<evidence type="ECO:0000255" key="3"/>
<evidence type="ECO:0000305" key="4"/>
<accession>Q8WNQ7</accession>
<keyword id="KW-0106">Calcium</keyword>
<keyword id="KW-1015">Disulfide bond</keyword>
<keyword id="KW-0325">Glycoprotein</keyword>
<keyword id="KW-0378">Hydrolase</keyword>
<keyword id="KW-0458">Lysosome</keyword>
<keyword id="KW-0479">Metal-binding</keyword>
<keyword id="KW-1185">Reference proteome</keyword>
<keyword id="KW-0732">Signal</keyword>
<name>GALNS_PIG</name>
<sequence length="522" mass="57711">MAAVAAATRWHLLLVLSAAGLGVTGAPQPPNILLLLMDDMGWGDLGVYGEPSRETPNLDRMAAEGMLFPSFYAANPLCSPSRAALLTGRLPIRTGFYTTNGHARNAYTPQEIVGGIPDPEHLLPELLKGAGYASKIVGKWHLGHRPQFHPLKHGFDEWFGSPNCHFGPYDNRARPNIPVYRDWEMVGRFYEEFPINLKTGESNLTQIYLQEALDFIKRQQATHHPFFLYWAIDATHAPVYASRAFLGTSQRGRYGDAVREIDDSVGRIVGLLRDLKIAGNTFVFFTSDNGAALVSAPKQGGSNGPFLCGKQTTFEGGMREPAIAWWPGHIPAGQVSHQLGSVMDLFTTSLSLAGLEPPSDRAIDGLDLLPAMLQGRLTERPIFYYRGNTLMAATLGQYKAHFWTWTNSWEEFRQGVDFCPGQNVSGVTTHSQEEHTKLPLIFHLGRDPGERFPLSFASTEYLDALRKITLVVQQHQESLVPGQPQLNVCNPAVMNWAPPGCEKLGKCLTPPESVPEKCSWPH</sequence>